<comment type="function">
    <text evidence="1">Probable C-mannosyltransferase that mediates C-mannosylation of tryptophan residues on target proteins.</text>
</comment>
<comment type="subcellular location">
    <subcellularLocation>
        <location evidence="6">Membrane</location>
        <topology evidence="6">Multi-pass membrane protein</topology>
    </subcellularLocation>
</comment>
<comment type="alternative products">
    <event type="alternative splicing"/>
    <isoform>
        <id>A2AJQ3-1</id>
        <name>1</name>
        <sequence type="displayed"/>
    </isoform>
    <isoform>
        <id>A2AJQ3-2</id>
        <name>2</name>
        <sequence type="described" ref="VSP_029632"/>
    </isoform>
</comment>
<comment type="similarity">
    <text evidence="6">Belongs to the dpy-19 family.</text>
</comment>
<accession>A2AJQ3</accession>
<accession>B2RW18</accession>
<accession>Q3T9A8</accession>
<proteinExistence type="evidence at transcript level"/>
<dbReference type="EC" id="2.4.1.-"/>
<dbReference type="EMBL" id="AL772170">
    <property type="status" value="NOT_ANNOTATED_CDS"/>
    <property type="molecule type" value="Genomic_DNA"/>
</dbReference>
<dbReference type="EMBL" id="AL840625">
    <property type="status" value="NOT_ANNOTATED_CDS"/>
    <property type="molecule type" value="Genomic_DNA"/>
</dbReference>
<dbReference type="EMBL" id="AL953845">
    <property type="status" value="NOT_ANNOTATED_CDS"/>
    <property type="molecule type" value="Genomic_DNA"/>
</dbReference>
<dbReference type="EMBL" id="BC147500">
    <property type="protein sequence ID" value="AAI47501.1"/>
    <property type="molecule type" value="mRNA"/>
</dbReference>
<dbReference type="EMBL" id="BC157932">
    <property type="protein sequence ID" value="AAI57933.1"/>
    <property type="molecule type" value="mRNA"/>
</dbReference>
<dbReference type="EMBL" id="BC157988">
    <property type="protein sequence ID" value="AAI57989.1"/>
    <property type="molecule type" value="mRNA"/>
</dbReference>
<dbReference type="EMBL" id="AK172656">
    <property type="protein sequence ID" value="BAE43116.1"/>
    <property type="molecule type" value="mRNA"/>
</dbReference>
<dbReference type="CCDS" id="CCDS38692.1">
    <molecule id="A2AJQ3-1"/>
</dbReference>
<dbReference type="RefSeq" id="NP_001074670.1">
    <molecule id="A2AJQ3-1"/>
    <property type="nucleotide sequence ID" value="NM_001081201.2"/>
</dbReference>
<dbReference type="SMR" id="A2AJQ3"/>
<dbReference type="BioGRID" id="237971">
    <property type="interactions" value="1"/>
</dbReference>
<dbReference type="FunCoup" id="A2AJQ3">
    <property type="interactions" value="1303"/>
</dbReference>
<dbReference type="STRING" id="10090.ENSMUSP00000081954"/>
<dbReference type="GlyConnect" id="2604">
    <property type="glycosylation" value="5 N-Linked glycans (1 site)"/>
</dbReference>
<dbReference type="GlyCosmos" id="A2AJQ3">
    <property type="glycosylation" value="1 site, 5 glycans"/>
</dbReference>
<dbReference type="GlyGen" id="A2AJQ3">
    <property type="glycosylation" value="3 sites, 8 N-linked glycans (3 sites)"/>
</dbReference>
<dbReference type="iPTMnet" id="A2AJQ3"/>
<dbReference type="PhosphoSitePlus" id="A2AJQ3"/>
<dbReference type="PaxDb" id="10090-ENSMUSP00000081954"/>
<dbReference type="PeptideAtlas" id="A2AJQ3"/>
<dbReference type="ProteomicsDB" id="285408">
    <molecule id="A2AJQ3-1"/>
</dbReference>
<dbReference type="ProteomicsDB" id="285409">
    <molecule id="A2AJQ3-2"/>
</dbReference>
<dbReference type="Pumba" id="A2AJQ3"/>
<dbReference type="Antibodypedia" id="25883">
    <property type="antibodies" value="99 antibodies from 15 providers"/>
</dbReference>
<dbReference type="Ensembl" id="ENSMUST00000084892.12">
    <molecule id="A2AJQ3-1"/>
    <property type="protein sequence ID" value="ENSMUSP00000081954.6"/>
    <property type="gene ID" value="ENSMUSG00000045205.17"/>
</dbReference>
<dbReference type="GeneID" id="381510"/>
<dbReference type="KEGG" id="mmu:381510"/>
<dbReference type="UCSC" id="uc008rzi.1">
    <molecule id="A2AJQ3-1"/>
    <property type="organism name" value="mouse"/>
</dbReference>
<dbReference type="UCSC" id="uc008rzj.1">
    <molecule id="A2AJQ3-2"/>
    <property type="organism name" value="mouse"/>
</dbReference>
<dbReference type="AGR" id="MGI:2685869"/>
<dbReference type="CTD" id="286148"/>
<dbReference type="MGI" id="MGI:2685869">
    <property type="gene designation" value="Dpy19l4"/>
</dbReference>
<dbReference type="VEuPathDB" id="HostDB:ENSMUSG00000045205"/>
<dbReference type="eggNOG" id="KOG4587">
    <property type="taxonomic scope" value="Eukaryota"/>
</dbReference>
<dbReference type="GeneTree" id="ENSGT00530000063023"/>
<dbReference type="InParanoid" id="A2AJQ3"/>
<dbReference type="OMA" id="PKYILFQ"/>
<dbReference type="OrthoDB" id="6019623at2759"/>
<dbReference type="PhylomeDB" id="A2AJQ3"/>
<dbReference type="TreeFam" id="TF313376"/>
<dbReference type="BRENDA" id="2.4.1.B72">
    <property type="organism ID" value="3474"/>
</dbReference>
<dbReference type="BioGRID-ORCS" id="381510">
    <property type="hits" value="1 hit in 78 CRISPR screens"/>
</dbReference>
<dbReference type="ChiTaRS" id="Dpy19l4">
    <property type="organism name" value="mouse"/>
</dbReference>
<dbReference type="PRO" id="PR:A2AJQ3"/>
<dbReference type="Proteomes" id="UP000000589">
    <property type="component" value="Chromosome 4"/>
</dbReference>
<dbReference type="RNAct" id="A2AJQ3">
    <property type="molecule type" value="protein"/>
</dbReference>
<dbReference type="Bgee" id="ENSMUSG00000045205">
    <property type="expression patterns" value="Expressed in manus and 225 other cell types or tissues"/>
</dbReference>
<dbReference type="ExpressionAtlas" id="A2AJQ3">
    <property type="expression patterns" value="baseline and differential"/>
</dbReference>
<dbReference type="GO" id="GO:0016020">
    <property type="term" value="C:membrane"/>
    <property type="evidence" value="ECO:0007669"/>
    <property type="project" value="UniProtKB-SubCell"/>
</dbReference>
<dbReference type="GO" id="GO:0016757">
    <property type="term" value="F:glycosyltransferase activity"/>
    <property type="evidence" value="ECO:0007669"/>
    <property type="project" value="UniProtKB-KW"/>
</dbReference>
<dbReference type="CDD" id="cd20180">
    <property type="entry name" value="Dpy19L4"/>
    <property type="match status" value="1"/>
</dbReference>
<dbReference type="InterPro" id="IPR018732">
    <property type="entry name" value="Dpy-19/Dpy-19-like"/>
</dbReference>
<dbReference type="InterPro" id="IPR047464">
    <property type="entry name" value="Dpy19L4"/>
</dbReference>
<dbReference type="PANTHER" id="PTHR31488:SF2">
    <property type="entry name" value="C-MANNOSYLTRANSFERASE DPY19L4-RELATED"/>
    <property type="match status" value="1"/>
</dbReference>
<dbReference type="PANTHER" id="PTHR31488">
    <property type="entry name" value="DPY-19-LIKE 1, LIKE (H. SAPIENS)"/>
    <property type="match status" value="1"/>
</dbReference>
<dbReference type="Pfam" id="PF10034">
    <property type="entry name" value="Dpy19"/>
    <property type="match status" value="1"/>
</dbReference>
<feature type="initiator methionine" description="Removed" evidence="2">
    <location>
        <position position="1"/>
    </location>
</feature>
<feature type="chain" id="PRO_0000311882" description="Probable C-mannosyltransferase DPY19L4">
    <location>
        <begin position="2"/>
        <end position="722"/>
    </location>
</feature>
<feature type="transmembrane region" description="Helical" evidence="3">
    <location>
        <begin position="51"/>
        <end position="71"/>
    </location>
</feature>
<feature type="transmembrane region" description="Helical" evidence="3">
    <location>
        <begin position="160"/>
        <end position="177"/>
    </location>
</feature>
<feature type="transmembrane region" description="Helical" evidence="3">
    <location>
        <begin position="183"/>
        <end position="201"/>
    </location>
</feature>
<feature type="transmembrane region" description="Helical" evidence="3">
    <location>
        <begin position="246"/>
        <end position="262"/>
    </location>
</feature>
<feature type="transmembrane region" description="Helical" evidence="3">
    <location>
        <begin position="268"/>
        <end position="284"/>
    </location>
</feature>
<feature type="transmembrane region" description="Helical" evidence="3">
    <location>
        <begin position="291"/>
        <end position="307"/>
    </location>
</feature>
<feature type="transmembrane region" description="Helical" evidence="3">
    <location>
        <begin position="313"/>
        <end position="331"/>
    </location>
</feature>
<feature type="transmembrane region" description="Helical" evidence="3">
    <location>
        <begin position="351"/>
        <end position="369"/>
    </location>
</feature>
<feature type="transmembrane region" description="Helical" evidence="3">
    <location>
        <begin position="420"/>
        <end position="440"/>
    </location>
</feature>
<feature type="transmembrane region" description="Helical" evidence="3">
    <location>
        <begin position="465"/>
        <end position="485"/>
    </location>
</feature>
<feature type="transmembrane region" description="Helical" evidence="3">
    <location>
        <begin position="487"/>
        <end position="507"/>
    </location>
</feature>
<feature type="transmembrane region" description="Helical" evidence="3">
    <location>
        <begin position="521"/>
        <end position="541"/>
    </location>
</feature>
<feature type="region of interest" description="Disordered" evidence="4">
    <location>
        <begin position="1"/>
        <end position="34"/>
    </location>
</feature>
<feature type="compositionally biased region" description="Basic and acidic residues" evidence="4">
    <location>
        <begin position="25"/>
        <end position="34"/>
    </location>
</feature>
<feature type="modified residue" description="N-acetylalanine" evidence="2">
    <location>
        <position position="2"/>
    </location>
</feature>
<feature type="splice variant" id="VSP_029632" description="In isoform 2." evidence="5">
    <location>
        <begin position="290"/>
        <end position="333"/>
    </location>
</feature>
<gene>
    <name type="primary">Dpy19l4</name>
    <name type="synonym">Gm1023</name>
</gene>
<sequence length="722" mass="83604">MAKEEGTSVEPRQRKKQRTSGSQEAKAEKIRRTPAPERAPKYVSFQRFAKIVIGCLAAVISGMMHVFYLSAYHERKFWFSNRQELEREITFQGDSAIYYSYYKDMLKAPSFERGVYELTHNNKTISLKTINAMQQMSLYPELIASVLYQATGSNEVIEPVYFYIGIVFGLQGMYVTALFVTSWLMSGTWLAGMLTVAWFLINRVDTTRIEYSIPLRENWALPYFACQVAALTGYLKRNLNTYAERFCYLLLSTSTYTFMMVWEYSHYVLFLQAVSLLLLDIFSVEQSDKVYEVYKVYIFSLFLGYLLQFENPALLVSPLLSLVGAFMLVKCLQLNGKKGTFVAKVIKVFEFYLLCTLPVTLNLIVKMFVPHKENEHVLKFLEVKFGLNMTKNFTLNWLLCQESLQAPSQDFFFRLTQSSLLPFYVLVLIICLLSMTQVFFRRMSGKSKKETVTLEDGRIGERPEIIYHVIHTLLLGSLAMLMEGLKFIWTPYVCMLAAFGVCSPELWMTLLKWLRLRTVHPMLLALILSMAVPTIIGLSLWKEFFPRLITELTELQEFYDPDTVELMTWIKRQAPVAAVFAGSPQLMGVIKLCTGWTVTSLPLYSDDDLLQRNENIYQIYSKRSAEDIYKILTSYKANYLIVEDAICNELGTTRGCRVKDLLDIANGHVVFEEGDKLTYSKYGRFCHEVKINYSPYVNYFTRVYWNRSYFVYKVNTVISFQS</sequence>
<protein>
    <recommendedName>
        <fullName>Probable C-mannosyltransferase DPY19L4</fullName>
        <ecNumber>2.4.1.-</ecNumber>
    </recommendedName>
    <alternativeName>
        <fullName>Dpy-19-like protein 4</fullName>
    </alternativeName>
    <alternativeName>
        <fullName>Protein dpy-19 homolog 4</fullName>
    </alternativeName>
</protein>
<keyword id="KW-0007">Acetylation</keyword>
<keyword id="KW-0025">Alternative splicing</keyword>
<keyword id="KW-0328">Glycosyltransferase</keyword>
<keyword id="KW-0472">Membrane</keyword>
<keyword id="KW-1185">Reference proteome</keyword>
<keyword id="KW-0808">Transferase</keyword>
<keyword id="KW-0812">Transmembrane</keyword>
<keyword id="KW-1133">Transmembrane helix</keyword>
<name>D19L4_MOUSE</name>
<reference key="1">
    <citation type="journal article" date="2009" name="PLoS Biol.">
        <title>Lineage-specific biology revealed by a finished genome assembly of the mouse.</title>
        <authorList>
            <person name="Church D.M."/>
            <person name="Goodstadt L."/>
            <person name="Hillier L.W."/>
            <person name="Zody M.C."/>
            <person name="Goldstein S."/>
            <person name="She X."/>
            <person name="Bult C.J."/>
            <person name="Agarwala R."/>
            <person name="Cherry J.L."/>
            <person name="DiCuccio M."/>
            <person name="Hlavina W."/>
            <person name="Kapustin Y."/>
            <person name="Meric P."/>
            <person name="Maglott D."/>
            <person name="Birtle Z."/>
            <person name="Marques A.C."/>
            <person name="Graves T."/>
            <person name="Zhou S."/>
            <person name="Teague B."/>
            <person name="Potamousis K."/>
            <person name="Churas C."/>
            <person name="Place M."/>
            <person name="Herschleb J."/>
            <person name="Runnheim R."/>
            <person name="Forrest D."/>
            <person name="Amos-Landgraf J."/>
            <person name="Schwartz D.C."/>
            <person name="Cheng Z."/>
            <person name="Lindblad-Toh K."/>
            <person name="Eichler E.E."/>
            <person name="Ponting C.P."/>
        </authorList>
    </citation>
    <scope>NUCLEOTIDE SEQUENCE [LARGE SCALE GENOMIC DNA]</scope>
    <source>
        <strain>C57BL/6J</strain>
    </source>
</reference>
<reference key="2">
    <citation type="journal article" date="2004" name="Genome Res.">
        <title>The status, quality, and expansion of the NIH full-length cDNA project: the Mammalian Gene Collection (MGC).</title>
        <authorList>
            <consortium name="The MGC Project Team"/>
        </authorList>
    </citation>
    <scope>NUCLEOTIDE SEQUENCE [LARGE SCALE MRNA] (ISOFORM 1)</scope>
    <source>
        <tissue>Brain</tissue>
    </source>
</reference>
<reference key="3">
    <citation type="journal article" date="2005" name="Science">
        <title>The transcriptional landscape of the mammalian genome.</title>
        <authorList>
            <person name="Carninci P."/>
            <person name="Kasukawa T."/>
            <person name="Katayama S."/>
            <person name="Gough J."/>
            <person name="Frith M.C."/>
            <person name="Maeda N."/>
            <person name="Oyama R."/>
            <person name="Ravasi T."/>
            <person name="Lenhard B."/>
            <person name="Wells C."/>
            <person name="Kodzius R."/>
            <person name="Shimokawa K."/>
            <person name="Bajic V.B."/>
            <person name="Brenner S.E."/>
            <person name="Batalov S."/>
            <person name="Forrest A.R."/>
            <person name="Zavolan M."/>
            <person name="Davis M.J."/>
            <person name="Wilming L.G."/>
            <person name="Aidinis V."/>
            <person name="Allen J.E."/>
            <person name="Ambesi-Impiombato A."/>
            <person name="Apweiler R."/>
            <person name="Aturaliya R.N."/>
            <person name="Bailey T.L."/>
            <person name="Bansal M."/>
            <person name="Baxter L."/>
            <person name="Beisel K.W."/>
            <person name="Bersano T."/>
            <person name="Bono H."/>
            <person name="Chalk A.M."/>
            <person name="Chiu K.P."/>
            <person name="Choudhary V."/>
            <person name="Christoffels A."/>
            <person name="Clutterbuck D.R."/>
            <person name="Crowe M.L."/>
            <person name="Dalla E."/>
            <person name="Dalrymple B.P."/>
            <person name="de Bono B."/>
            <person name="Della Gatta G."/>
            <person name="di Bernardo D."/>
            <person name="Down T."/>
            <person name="Engstrom P."/>
            <person name="Fagiolini M."/>
            <person name="Faulkner G."/>
            <person name="Fletcher C.F."/>
            <person name="Fukushima T."/>
            <person name="Furuno M."/>
            <person name="Futaki S."/>
            <person name="Gariboldi M."/>
            <person name="Georgii-Hemming P."/>
            <person name="Gingeras T.R."/>
            <person name="Gojobori T."/>
            <person name="Green R.E."/>
            <person name="Gustincich S."/>
            <person name="Harbers M."/>
            <person name="Hayashi Y."/>
            <person name="Hensch T.K."/>
            <person name="Hirokawa N."/>
            <person name="Hill D."/>
            <person name="Huminiecki L."/>
            <person name="Iacono M."/>
            <person name="Ikeo K."/>
            <person name="Iwama A."/>
            <person name="Ishikawa T."/>
            <person name="Jakt M."/>
            <person name="Kanapin A."/>
            <person name="Katoh M."/>
            <person name="Kawasawa Y."/>
            <person name="Kelso J."/>
            <person name="Kitamura H."/>
            <person name="Kitano H."/>
            <person name="Kollias G."/>
            <person name="Krishnan S.P."/>
            <person name="Kruger A."/>
            <person name="Kummerfeld S.K."/>
            <person name="Kurochkin I.V."/>
            <person name="Lareau L.F."/>
            <person name="Lazarevic D."/>
            <person name="Lipovich L."/>
            <person name="Liu J."/>
            <person name="Liuni S."/>
            <person name="McWilliam S."/>
            <person name="Madan Babu M."/>
            <person name="Madera M."/>
            <person name="Marchionni L."/>
            <person name="Matsuda H."/>
            <person name="Matsuzawa S."/>
            <person name="Miki H."/>
            <person name="Mignone F."/>
            <person name="Miyake S."/>
            <person name="Morris K."/>
            <person name="Mottagui-Tabar S."/>
            <person name="Mulder N."/>
            <person name="Nakano N."/>
            <person name="Nakauchi H."/>
            <person name="Ng P."/>
            <person name="Nilsson R."/>
            <person name="Nishiguchi S."/>
            <person name="Nishikawa S."/>
            <person name="Nori F."/>
            <person name="Ohara O."/>
            <person name="Okazaki Y."/>
            <person name="Orlando V."/>
            <person name="Pang K.C."/>
            <person name="Pavan W.J."/>
            <person name="Pavesi G."/>
            <person name="Pesole G."/>
            <person name="Petrovsky N."/>
            <person name="Piazza S."/>
            <person name="Reed J."/>
            <person name="Reid J.F."/>
            <person name="Ring B.Z."/>
            <person name="Ringwald M."/>
            <person name="Rost B."/>
            <person name="Ruan Y."/>
            <person name="Salzberg S.L."/>
            <person name="Sandelin A."/>
            <person name="Schneider C."/>
            <person name="Schoenbach C."/>
            <person name="Sekiguchi K."/>
            <person name="Semple C.A."/>
            <person name="Seno S."/>
            <person name="Sessa L."/>
            <person name="Sheng Y."/>
            <person name="Shibata Y."/>
            <person name="Shimada H."/>
            <person name="Shimada K."/>
            <person name="Silva D."/>
            <person name="Sinclair B."/>
            <person name="Sperling S."/>
            <person name="Stupka E."/>
            <person name="Sugiura K."/>
            <person name="Sultana R."/>
            <person name="Takenaka Y."/>
            <person name="Taki K."/>
            <person name="Tammoja K."/>
            <person name="Tan S.L."/>
            <person name="Tang S."/>
            <person name="Taylor M.S."/>
            <person name="Tegner J."/>
            <person name="Teichmann S.A."/>
            <person name="Ueda H.R."/>
            <person name="van Nimwegen E."/>
            <person name="Verardo R."/>
            <person name="Wei C.L."/>
            <person name="Yagi K."/>
            <person name="Yamanishi H."/>
            <person name="Zabarovsky E."/>
            <person name="Zhu S."/>
            <person name="Zimmer A."/>
            <person name="Hide W."/>
            <person name="Bult C."/>
            <person name="Grimmond S.M."/>
            <person name="Teasdale R.D."/>
            <person name="Liu E.T."/>
            <person name="Brusic V."/>
            <person name="Quackenbush J."/>
            <person name="Wahlestedt C."/>
            <person name="Mattick J.S."/>
            <person name="Hume D.A."/>
            <person name="Kai C."/>
            <person name="Sasaki D."/>
            <person name="Tomaru Y."/>
            <person name="Fukuda S."/>
            <person name="Kanamori-Katayama M."/>
            <person name="Suzuki M."/>
            <person name="Aoki J."/>
            <person name="Arakawa T."/>
            <person name="Iida J."/>
            <person name="Imamura K."/>
            <person name="Itoh M."/>
            <person name="Kato T."/>
            <person name="Kawaji H."/>
            <person name="Kawagashira N."/>
            <person name="Kawashima T."/>
            <person name="Kojima M."/>
            <person name="Kondo S."/>
            <person name="Konno H."/>
            <person name="Nakano K."/>
            <person name="Ninomiya N."/>
            <person name="Nishio T."/>
            <person name="Okada M."/>
            <person name="Plessy C."/>
            <person name="Shibata K."/>
            <person name="Shiraki T."/>
            <person name="Suzuki S."/>
            <person name="Tagami M."/>
            <person name="Waki K."/>
            <person name="Watahiki A."/>
            <person name="Okamura-Oho Y."/>
            <person name="Suzuki H."/>
            <person name="Kawai J."/>
            <person name="Hayashizaki Y."/>
        </authorList>
    </citation>
    <scope>NUCLEOTIDE SEQUENCE [LARGE SCALE MRNA] OF 1-568 (ISOFORM 2)</scope>
    <source>
        <strain>NOD</strain>
        <tissue>Spleen</tissue>
    </source>
</reference>
<organism>
    <name type="scientific">Mus musculus</name>
    <name type="common">Mouse</name>
    <dbReference type="NCBI Taxonomy" id="10090"/>
    <lineage>
        <taxon>Eukaryota</taxon>
        <taxon>Metazoa</taxon>
        <taxon>Chordata</taxon>
        <taxon>Craniata</taxon>
        <taxon>Vertebrata</taxon>
        <taxon>Euteleostomi</taxon>
        <taxon>Mammalia</taxon>
        <taxon>Eutheria</taxon>
        <taxon>Euarchontoglires</taxon>
        <taxon>Glires</taxon>
        <taxon>Rodentia</taxon>
        <taxon>Myomorpha</taxon>
        <taxon>Muroidea</taxon>
        <taxon>Muridae</taxon>
        <taxon>Murinae</taxon>
        <taxon>Mus</taxon>
        <taxon>Mus</taxon>
    </lineage>
</organism>
<evidence type="ECO:0000250" key="1"/>
<evidence type="ECO:0000250" key="2">
    <source>
        <dbReference type="UniProtKB" id="Q7Z388"/>
    </source>
</evidence>
<evidence type="ECO:0000255" key="3"/>
<evidence type="ECO:0000256" key="4">
    <source>
        <dbReference type="SAM" id="MobiDB-lite"/>
    </source>
</evidence>
<evidence type="ECO:0000303" key="5">
    <source>
    </source>
</evidence>
<evidence type="ECO:0000305" key="6"/>